<feature type="chain" id="PRO_0000403542" description="Flap endonuclease 1">
    <location>
        <begin position="1"/>
        <end position="480"/>
    </location>
</feature>
<feature type="region of interest" description="N-domain">
    <location>
        <begin position="1"/>
        <end position="106"/>
    </location>
</feature>
<feature type="region of interest" description="I-domain">
    <location>
        <begin position="124"/>
        <end position="266"/>
    </location>
</feature>
<feature type="region of interest" description="Interaction with PCNA" evidence="1">
    <location>
        <begin position="349"/>
        <end position="357"/>
    </location>
</feature>
<feature type="region of interest" description="Disordered" evidence="2">
    <location>
        <begin position="379"/>
        <end position="461"/>
    </location>
</feature>
<feature type="compositionally biased region" description="Basic and acidic residues" evidence="2">
    <location>
        <begin position="404"/>
        <end position="428"/>
    </location>
</feature>
<feature type="compositionally biased region" description="Acidic residues" evidence="2">
    <location>
        <begin position="429"/>
        <end position="438"/>
    </location>
</feature>
<feature type="binding site" evidence="1">
    <location>
        <position position="34"/>
    </location>
    <ligand>
        <name>Mg(2+)</name>
        <dbReference type="ChEBI" id="CHEBI:18420"/>
        <label>1</label>
    </ligand>
</feature>
<feature type="binding site" evidence="1">
    <location>
        <position position="47"/>
    </location>
    <ligand>
        <name>DNA</name>
        <dbReference type="ChEBI" id="CHEBI:16991"/>
    </ligand>
</feature>
<feature type="binding site" evidence="1">
    <location>
        <position position="72"/>
    </location>
    <ligand>
        <name>DNA</name>
        <dbReference type="ChEBI" id="CHEBI:16991"/>
    </ligand>
</feature>
<feature type="binding site" evidence="1">
    <location>
        <position position="88"/>
    </location>
    <ligand>
        <name>Mg(2+)</name>
        <dbReference type="ChEBI" id="CHEBI:18420"/>
        <label>1</label>
    </ligand>
</feature>
<feature type="binding site" evidence="1">
    <location>
        <position position="160"/>
    </location>
    <ligand>
        <name>DNA</name>
        <dbReference type="ChEBI" id="CHEBI:16991"/>
    </ligand>
</feature>
<feature type="binding site" evidence="1">
    <location>
        <position position="160"/>
    </location>
    <ligand>
        <name>Mg(2+)</name>
        <dbReference type="ChEBI" id="CHEBI:18420"/>
        <label>1</label>
    </ligand>
</feature>
<feature type="binding site" evidence="1">
    <location>
        <position position="162"/>
    </location>
    <ligand>
        <name>Mg(2+)</name>
        <dbReference type="ChEBI" id="CHEBI:18420"/>
        <label>1</label>
    </ligand>
</feature>
<feature type="binding site" evidence="1">
    <location>
        <position position="181"/>
    </location>
    <ligand>
        <name>Mg(2+)</name>
        <dbReference type="ChEBI" id="CHEBI:18420"/>
        <label>2</label>
    </ligand>
</feature>
<feature type="binding site" evidence="1">
    <location>
        <position position="183"/>
    </location>
    <ligand>
        <name>Mg(2+)</name>
        <dbReference type="ChEBI" id="CHEBI:18420"/>
        <label>2</label>
    </ligand>
</feature>
<feature type="binding site" evidence="1">
    <location>
        <position position="244"/>
    </location>
    <ligand>
        <name>DNA</name>
        <dbReference type="ChEBI" id="CHEBI:16991"/>
    </ligand>
</feature>
<feature type="binding site" evidence="1">
    <location>
        <position position="246"/>
    </location>
    <ligand>
        <name>DNA</name>
        <dbReference type="ChEBI" id="CHEBI:16991"/>
    </ligand>
</feature>
<feature type="binding site" evidence="1">
    <location>
        <position position="246"/>
    </location>
    <ligand>
        <name>Mg(2+)</name>
        <dbReference type="ChEBI" id="CHEBI:18420"/>
        <label>2</label>
    </ligand>
</feature>
<comment type="function">
    <text evidence="1 3">Structure-specific nuclease with 5'-flap endonuclease and 5'-3' exonuclease activities involved in DNA replication and repair. During DNA replication, cleaves the 5'-overhanging flap structure that is generated by displacement synthesis when DNA polymerase encounters the 5'-end of a downstream Okazaki fragment. It enters the flap from the 5'-end and then tracks to cleave the flap base, leaving a nick for ligation. Also involved in the long patch base excision repair (LP-BER) pathway, by cleaving within the apurinic/apyrimidinic (AP) site-terminated flap. Acts as a genome stabilization factor that prevents flaps from equilibrating into structures that lead to duplications and deletions. Also possesses 5'-3' exonuclease activity on nicked or gapped double-stranded DNA, and exhibits RNase H activity. Also involved in replication and repair of rDNA and in repairing mitochondrial DNA.</text>
</comment>
<comment type="cofactor">
    <cofactor evidence="1">
        <name>Mg(2+)</name>
        <dbReference type="ChEBI" id="CHEBI:18420"/>
    </cofactor>
    <text evidence="1">Binds 2 magnesium ions per subunit. They probably participate in the reaction catalyzed by the enzyme. May bind an additional third magnesium ion after substrate binding.</text>
</comment>
<comment type="activity regulation">
    <text evidence="3">Inhibited by monovalent metal ions.</text>
</comment>
<comment type="subunit">
    <text evidence="1">Interacts with PCNA. Three molecules of FEN1 bind to one PCNA trimer with each molecule binding to one PCNA monomer. PCNA stimulates the nuclease activity without altering cleavage specificity.</text>
</comment>
<comment type="subcellular location">
    <subcellularLocation>
        <location evidence="1">Nucleus</location>
        <location evidence="1">Nucleolus</location>
    </subcellularLocation>
    <subcellularLocation>
        <location evidence="1">Nucleus</location>
        <location evidence="1">Nucleoplasm</location>
    </subcellularLocation>
    <subcellularLocation>
        <location evidence="1">Mitochondrion</location>
    </subcellularLocation>
    <text evidence="1">Resides mostly in the nucleoli and relocalizes to the nucleoplasm upon DNA damage.</text>
</comment>
<comment type="PTM">
    <text evidence="1">Phosphorylated. Phosphorylation upon DNA damage induces relocalization to the nuclear plasma.</text>
</comment>
<comment type="similarity">
    <text evidence="1">Belongs to the XPG/RAD2 endonuclease family. FEN1 subfamily.</text>
</comment>
<dbReference type="EC" id="3.1.-.-" evidence="1"/>
<dbReference type="EMBL" id="AABL01000611">
    <property type="protein sequence ID" value="EAA21673.1"/>
    <property type="molecule type" value="Genomic_DNA"/>
</dbReference>
<dbReference type="SMR" id="Q7RME3"/>
<dbReference type="FunCoup" id="Q7RME3">
    <property type="interactions" value="544"/>
</dbReference>
<dbReference type="STRING" id="73239.Q7RME3"/>
<dbReference type="PaxDb" id="73239-Q7RME3"/>
<dbReference type="EnsemblProtists" id="EAA21673">
    <property type="protein sequence ID" value="EAA21673"/>
    <property type="gene ID" value="EAA21673"/>
</dbReference>
<dbReference type="KEGG" id="pyo:PY17X_1007500"/>
<dbReference type="VEuPathDB" id="PlasmoDB:Py17XNL_001002132"/>
<dbReference type="InParanoid" id="Q7RME3"/>
<dbReference type="BRENDA" id="3.1.16.1">
    <property type="organism ID" value="4895"/>
</dbReference>
<dbReference type="Proteomes" id="UP000008553">
    <property type="component" value="Unassembled WGS sequence"/>
</dbReference>
<dbReference type="GO" id="GO:0005739">
    <property type="term" value="C:mitochondrion"/>
    <property type="evidence" value="ECO:0007669"/>
    <property type="project" value="UniProtKB-SubCell"/>
</dbReference>
<dbReference type="GO" id="GO:0005730">
    <property type="term" value="C:nucleolus"/>
    <property type="evidence" value="ECO:0007669"/>
    <property type="project" value="UniProtKB-SubCell"/>
</dbReference>
<dbReference type="GO" id="GO:0005654">
    <property type="term" value="C:nucleoplasm"/>
    <property type="evidence" value="ECO:0007669"/>
    <property type="project" value="UniProtKB-SubCell"/>
</dbReference>
<dbReference type="GO" id="GO:0008409">
    <property type="term" value="F:5'-3' exonuclease activity"/>
    <property type="evidence" value="ECO:0007669"/>
    <property type="project" value="UniProtKB-UniRule"/>
</dbReference>
<dbReference type="GO" id="GO:0017108">
    <property type="term" value="F:5'-flap endonuclease activity"/>
    <property type="evidence" value="ECO:0007669"/>
    <property type="project" value="UniProtKB-UniRule"/>
</dbReference>
<dbReference type="GO" id="GO:0003677">
    <property type="term" value="F:DNA binding"/>
    <property type="evidence" value="ECO:0007669"/>
    <property type="project" value="UniProtKB-UniRule"/>
</dbReference>
<dbReference type="GO" id="GO:0000287">
    <property type="term" value="F:magnesium ion binding"/>
    <property type="evidence" value="ECO:0007669"/>
    <property type="project" value="UniProtKB-UniRule"/>
</dbReference>
<dbReference type="GO" id="GO:0006284">
    <property type="term" value="P:base-excision repair"/>
    <property type="evidence" value="ECO:0007669"/>
    <property type="project" value="UniProtKB-UniRule"/>
</dbReference>
<dbReference type="GO" id="GO:0043137">
    <property type="term" value="P:DNA replication, removal of RNA primer"/>
    <property type="evidence" value="ECO:0007669"/>
    <property type="project" value="UniProtKB-UniRule"/>
</dbReference>
<dbReference type="CDD" id="cd09907">
    <property type="entry name" value="H3TH_FEN1-Euk"/>
    <property type="match status" value="1"/>
</dbReference>
<dbReference type="CDD" id="cd09867">
    <property type="entry name" value="PIN_FEN1"/>
    <property type="match status" value="1"/>
</dbReference>
<dbReference type="FunFam" id="1.10.150.20:FF:000009">
    <property type="entry name" value="Flap endonuclease 1"/>
    <property type="match status" value="1"/>
</dbReference>
<dbReference type="FunFam" id="3.40.50.1010:FF:000016">
    <property type="entry name" value="Flap endonuclease 1"/>
    <property type="match status" value="1"/>
</dbReference>
<dbReference type="Gene3D" id="1.10.150.20">
    <property type="entry name" value="5' to 3' exonuclease, C-terminal subdomain"/>
    <property type="match status" value="1"/>
</dbReference>
<dbReference type="Gene3D" id="3.40.50.1010">
    <property type="entry name" value="5'-nuclease"/>
    <property type="match status" value="1"/>
</dbReference>
<dbReference type="HAMAP" id="MF_00614">
    <property type="entry name" value="Fen"/>
    <property type="match status" value="1"/>
</dbReference>
<dbReference type="InterPro" id="IPR002421">
    <property type="entry name" value="5-3_exonuclease"/>
</dbReference>
<dbReference type="InterPro" id="IPR036279">
    <property type="entry name" value="5-3_exonuclease_C_sf"/>
</dbReference>
<dbReference type="InterPro" id="IPR023426">
    <property type="entry name" value="Flap_endonuc"/>
</dbReference>
<dbReference type="InterPro" id="IPR008918">
    <property type="entry name" value="HhH2"/>
</dbReference>
<dbReference type="InterPro" id="IPR029060">
    <property type="entry name" value="PIN-like_dom_sf"/>
</dbReference>
<dbReference type="InterPro" id="IPR006086">
    <property type="entry name" value="XPG-I_dom"/>
</dbReference>
<dbReference type="InterPro" id="IPR006084">
    <property type="entry name" value="XPG/Rad2"/>
</dbReference>
<dbReference type="InterPro" id="IPR019974">
    <property type="entry name" value="XPG_CS"/>
</dbReference>
<dbReference type="InterPro" id="IPR006085">
    <property type="entry name" value="XPG_DNA_repair_N"/>
</dbReference>
<dbReference type="PANTHER" id="PTHR11081:SF9">
    <property type="entry name" value="FLAP ENDONUCLEASE 1"/>
    <property type="match status" value="1"/>
</dbReference>
<dbReference type="PANTHER" id="PTHR11081">
    <property type="entry name" value="FLAP ENDONUCLEASE FAMILY MEMBER"/>
    <property type="match status" value="1"/>
</dbReference>
<dbReference type="Pfam" id="PF00867">
    <property type="entry name" value="XPG_I"/>
    <property type="match status" value="1"/>
</dbReference>
<dbReference type="Pfam" id="PF00752">
    <property type="entry name" value="XPG_N"/>
    <property type="match status" value="1"/>
</dbReference>
<dbReference type="PRINTS" id="PR00853">
    <property type="entry name" value="XPGRADSUPER"/>
</dbReference>
<dbReference type="SMART" id="SM00475">
    <property type="entry name" value="53EXOc"/>
    <property type="match status" value="1"/>
</dbReference>
<dbReference type="SMART" id="SM00279">
    <property type="entry name" value="HhH2"/>
    <property type="match status" value="1"/>
</dbReference>
<dbReference type="SMART" id="SM00484">
    <property type="entry name" value="XPGI"/>
    <property type="match status" value="1"/>
</dbReference>
<dbReference type="SMART" id="SM00485">
    <property type="entry name" value="XPGN"/>
    <property type="match status" value="1"/>
</dbReference>
<dbReference type="SUPFAM" id="SSF47807">
    <property type="entry name" value="5' to 3' exonuclease, C-terminal subdomain"/>
    <property type="match status" value="1"/>
</dbReference>
<dbReference type="SUPFAM" id="SSF88723">
    <property type="entry name" value="PIN domain-like"/>
    <property type="match status" value="1"/>
</dbReference>
<dbReference type="PROSITE" id="PS00841">
    <property type="entry name" value="XPG_1"/>
    <property type="match status" value="1"/>
</dbReference>
<proteinExistence type="inferred from homology"/>
<protein>
    <recommendedName>
        <fullName evidence="1">Flap endonuclease 1</fullName>
        <shortName evidence="1">FEN-1</shortName>
        <ecNumber evidence="1">3.1.-.-</ecNumber>
    </recommendedName>
    <alternativeName>
        <fullName evidence="1">Flap structure-specific endonuclease 1</fullName>
    </alternativeName>
</protein>
<gene>
    <name evidence="1" type="primary">FEN1</name>
    <name type="ORF">PY02238</name>
</gene>
<keyword id="KW-0227">DNA damage</keyword>
<keyword id="KW-0234">DNA repair</keyword>
<keyword id="KW-0235">DNA replication</keyword>
<keyword id="KW-0255">Endonuclease</keyword>
<keyword id="KW-0269">Exonuclease</keyword>
<keyword id="KW-0378">Hydrolase</keyword>
<keyword id="KW-0460">Magnesium</keyword>
<keyword id="KW-0479">Metal-binding</keyword>
<keyword id="KW-0496">Mitochondrion</keyword>
<keyword id="KW-0540">Nuclease</keyword>
<keyword id="KW-0539">Nucleus</keyword>
<keyword id="KW-0597">Phosphoprotein</keyword>
<keyword id="KW-1185">Reference proteome</keyword>
<reference key="1">
    <citation type="journal article" date="2002" name="Nature">
        <title>Genome sequence and comparative analysis of the model rodent malaria parasite Plasmodium yoelii yoelii.</title>
        <authorList>
            <person name="Carlton J.M."/>
            <person name="Angiuoli S.V."/>
            <person name="Suh B.B."/>
            <person name="Kooij T.W."/>
            <person name="Pertea M."/>
            <person name="Silva J.C."/>
            <person name="Ermolaeva M.D."/>
            <person name="Allen J.E."/>
            <person name="Selengut J.D."/>
            <person name="Koo H.L."/>
            <person name="Peterson J.D."/>
            <person name="Pop M."/>
            <person name="Kosack D.S."/>
            <person name="Shumway M.F."/>
            <person name="Bidwell S.L."/>
            <person name="Shallom S.J."/>
            <person name="van Aken S.E."/>
            <person name="Riedmuller S.B."/>
            <person name="Feldblyum T.V."/>
            <person name="Cho J.K."/>
            <person name="Quackenbush J."/>
            <person name="Sedegah M."/>
            <person name="Shoaibi A."/>
            <person name="Cummings L.M."/>
            <person name="Florens L."/>
            <person name="Yates J.R. III"/>
            <person name="Raine J.D."/>
            <person name="Sinden R.E."/>
            <person name="Harris M.A."/>
            <person name="Cunningham D.A."/>
            <person name="Preiser P.R."/>
            <person name="Bergman L.W."/>
            <person name="Vaidya A.B."/>
            <person name="van Lin L.H."/>
            <person name="Janse C.J."/>
            <person name="Waters A.P."/>
            <person name="Smith H.O."/>
            <person name="White O.R."/>
            <person name="Salzberg S.L."/>
            <person name="Venter J.C."/>
            <person name="Fraser C.M."/>
            <person name="Hoffman S.L."/>
            <person name="Gardner M.J."/>
            <person name="Carucci D.J."/>
        </authorList>
    </citation>
    <scope>NUCLEOTIDE SEQUENCE [LARGE SCALE GENOMIC DNA]</scope>
    <source>
        <strain>17XNL</strain>
    </source>
</reference>
<reference key="2">
    <citation type="journal article" date="2008" name="Mol. Biochem. Parasitol.">
        <title>Expression and biochemical characterization of the Plasmodium falciparum DNA repair enzyme, flap endonuclease-1 (PfFEN-1).</title>
        <authorList>
            <person name="Casta L.J."/>
            <person name="Buguliskis J.S."/>
            <person name="Matsumoto Y."/>
            <person name="Taraschi T.F."/>
        </authorList>
    </citation>
    <scope>FUNCTION</scope>
    <scope>ENDONUCLEASE AND EXONUCLEASE ACTIVITIES</scope>
    <scope>ACTIVITY REGULATION</scope>
</reference>
<sequence>MGIKGLTKFIADTAPNAIKEIKIENLMGRVVAIDASMSLYQFIIAIRDGDQYGNLMNESGETTSHISGLMSRTIKLMENGLKPIYVFDGAPPELKGSELEKRGEKRQKAEELLIKAKAEGNLEEIKKQSGRTVRVTKKQNEEAKKLLTLMGIPVIESPCEAEAQCAFLTKYEMAHATATEDADALVFGTKILIRNLNANASSNKNKNKNSSKRGYILTEINLEQVLKGLKLTMDEFIDFCILCGCDYCDTIKGIGSKTAYNLIKEYNCIENIIKNIDQNKYQVPANFKYVEARQSFINPKVLEKSEVKIDWCEPKIEELKTFLIKEHNFNEVRVTNYITRLLKARKVTTQRRLDTFFTTCTKKSTKLIIEESQKEVLKTKGKGKKREINNDSSTKLNAKKKKTNVKDEKKNNEKVDELKNKSDENLVKDEEDDQDDYDQNIFDEKTNSESGNIKNENVKEDVSSNDITMDIPKCTNDIVC</sequence>
<accession>Q7RME3</accession>
<evidence type="ECO:0000255" key="1">
    <source>
        <dbReference type="HAMAP-Rule" id="MF_03140"/>
    </source>
</evidence>
<evidence type="ECO:0000256" key="2">
    <source>
        <dbReference type="SAM" id="MobiDB-lite"/>
    </source>
</evidence>
<evidence type="ECO:0000269" key="3">
    <source>
    </source>
</evidence>
<organism>
    <name type="scientific">Plasmodium yoelii yoelii</name>
    <dbReference type="NCBI Taxonomy" id="73239"/>
    <lineage>
        <taxon>Eukaryota</taxon>
        <taxon>Sar</taxon>
        <taxon>Alveolata</taxon>
        <taxon>Apicomplexa</taxon>
        <taxon>Aconoidasida</taxon>
        <taxon>Haemosporida</taxon>
        <taxon>Plasmodiidae</taxon>
        <taxon>Plasmodium</taxon>
        <taxon>Plasmodium (Vinckeia)</taxon>
    </lineage>
</organism>
<name>FEN1_PLAYO</name>